<name>CYPD2_CATRO</name>
<comment type="subcellular location">
    <subcellularLocation>
        <location evidence="2">Membrane</location>
        <topology evidence="2">Multi-pass membrane protein</topology>
    </subcellularLocation>
</comment>
<comment type="similarity">
    <text evidence="4">Belongs to the cytochrome P450 family.</text>
</comment>
<keyword id="KW-0349">Heme</keyword>
<keyword id="KW-0408">Iron</keyword>
<keyword id="KW-0472">Membrane</keyword>
<keyword id="KW-0479">Metal-binding</keyword>
<keyword id="KW-0503">Monooxygenase</keyword>
<keyword id="KW-0560">Oxidoreductase</keyword>
<keyword id="KW-0812">Transmembrane</keyword>
<keyword id="KW-1133">Transmembrane helix</keyword>
<proteinExistence type="evidence at transcript level"/>
<sequence>MDFEYLPFNLVTFFIFLFFVFLLIYGRRKSKRTXKINLPPGPWKLPILGNLHNMMMGSSPHHIFRDLSRKYGDLMLIKLGEFNTIVASSPRMAKEVLKTHDLSFLNRPIIQATKILCYDNSALVFSQYGDSWRQMRKIFVLELLSTKRVRSFQPIRQDEGSRLVSLIKESVGKSIDLSEKIKLYTTSMVARAAFGKVNDAGVTFLKLVTEAAEVAEGFDPADMFPSYKFLNVFFNSRSNLLKIHGKTDMILEEMIDEHIKSHQMGKKANGENGEEDVIDILLSIKDSGDLGISHWMNNVKALIFDMFSAGTETSSATVEWAMTELMKNPSVMRKAQDEVRQAFKGKKTIDESDLEELKYLKLVVKEVLRLHPFAPLLVPRECREACQIDGYDIPVKTRVFVNVWAIGRDEKYWKDPESFIPERFEDNSLDFTGNNFEYLPFGCGRRICPGMTFGLANVHLVLALLLYHFNWKLPPGVNDIDMAERPGLGASKKHGLVLVPSFYQPSF</sequence>
<organism>
    <name type="scientific">Catharanthus roseus</name>
    <name type="common">Madagascar periwinkle</name>
    <name type="synonym">Vinca rosea</name>
    <dbReference type="NCBI Taxonomy" id="4058"/>
    <lineage>
        <taxon>Eukaryota</taxon>
        <taxon>Viridiplantae</taxon>
        <taxon>Streptophyta</taxon>
        <taxon>Embryophyta</taxon>
        <taxon>Tracheophyta</taxon>
        <taxon>Spermatophyta</taxon>
        <taxon>Magnoliopsida</taxon>
        <taxon>eudicotyledons</taxon>
        <taxon>Gunneridae</taxon>
        <taxon>Pentapetalae</taxon>
        <taxon>asterids</taxon>
        <taxon>lamiids</taxon>
        <taxon>Gentianales</taxon>
        <taxon>Apocynaceae</taxon>
        <taxon>Rauvolfioideae</taxon>
        <taxon>Vinceae</taxon>
        <taxon>Catharanthinae</taxon>
        <taxon>Catharanthus</taxon>
    </lineage>
</organism>
<evidence type="ECO:0000250" key="1">
    <source>
        <dbReference type="UniProtKB" id="P04798"/>
    </source>
</evidence>
<evidence type="ECO:0000255" key="2"/>
<evidence type="ECO:0000303" key="3">
    <source>
    </source>
</evidence>
<evidence type="ECO:0000305" key="4"/>
<gene>
    <name evidence="3" type="primary">CYP71D2</name>
</gene>
<protein>
    <recommendedName>
        <fullName evidence="3">Cytochrome P450 71D2</fullName>
        <shortName evidence="3">CrCYP71D2</shortName>
        <ecNumber evidence="4">1.14.-.-</ecNumber>
    </recommendedName>
</protein>
<feature type="chain" id="PRO_0000446412" description="Cytochrome P450 71D2">
    <location>
        <begin position="1"/>
        <end position="507"/>
    </location>
</feature>
<feature type="transmembrane region" description="Helical" evidence="2">
    <location>
        <begin position="6"/>
        <end position="26"/>
    </location>
</feature>
<feature type="transmembrane region" description="Helical" evidence="2">
    <location>
        <begin position="447"/>
        <end position="467"/>
    </location>
</feature>
<feature type="binding site" description="axial binding residue" evidence="1">
    <location>
        <position position="448"/>
    </location>
    <ligand>
        <name>heme</name>
        <dbReference type="ChEBI" id="CHEBI:30413"/>
    </ligand>
    <ligandPart>
        <name>Fe</name>
        <dbReference type="ChEBI" id="CHEBI:18248"/>
    </ligandPart>
</feature>
<accession>W8JIT4</accession>
<dbReference type="EC" id="1.14.-.-" evidence="4"/>
<dbReference type="EMBL" id="KF302076">
    <property type="protein sequence ID" value="AHK60843.1"/>
    <property type="molecule type" value="mRNA"/>
</dbReference>
<dbReference type="GO" id="GO:0016020">
    <property type="term" value="C:membrane"/>
    <property type="evidence" value="ECO:0007669"/>
    <property type="project" value="UniProtKB-SubCell"/>
</dbReference>
<dbReference type="GO" id="GO:0020037">
    <property type="term" value="F:heme binding"/>
    <property type="evidence" value="ECO:0007669"/>
    <property type="project" value="InterPro"/>
</dbReference>
<dbReference type="GO" id="GO:0005506">
    <property type="term" value="F:iron ion binding"/>
    <property type="evidence" value="ECO:0007669"/>
    <property type="project" value="InterPro"/>
</dbReference>
<dbReference type="GO" id="GO:0004497">
    <property type="term" value="F:monooxygenase activity"/>
    <property type="evidence" value="ECO:0007669"/>
    <property type="project" value="UniProtKB-KW"/>
</dbReference>
<dbReference type="GO" id="GO:0016705">
    <property type="term" value="F:oxidoreductase activity, acting on paired donors, with incorporation or reduction of molecular oxygen"/>
    <property type="evidence" value="ECO:0007669"/>
    <property type="project" value="InterPro"/>
</dbReference>
<dbReference type="CDD" id="cd11072">
    <property type="entry name" value="CYP71-like"/>
    <property type="match status" value="1"/>
</dbReference>
<dbReference type="FunFam" id="1.10.630.10:FF:000043">
    <property type="entry name" value="Cytochrome P450 99A2"/>
    <property type="match status" value="1"/>
</dbReference>
<dbReference type="Gene3D" id="1.10.630.10">
    <property type="entry name" value="Cytochrome P450"/>
    <property type="match status" value="1"/>
</dbReference>
<dbReference type="InterPro" id="IPR052306">
    <property type="entry name" value="CYP450_71D"/>
</dbReference>
<dbReference type="InterPro" id="IPR001128">
    <property type="entry name" value="Cyt_P450"/>
</dbReference>
<dbReference type="InterPro" id="IPR017972">
    <property type="entry name" value="Cyt_P450_CS"/>
</dbReference>
<dbReference type="InterPro" id="IPR002401">
    <property type="entry name" value="Cyt_P450_E_grp-I"/>
</dbReference>
<dbReference type="InterPro" id="IPR036396">
    <property type="entry name" value="Cyt_P450_sf"/>
</dbReference>
<dbReference type="PANTHER" id="PTHR47953:SF16">
    <property type="entry name" value="CYTOCHROME P450 71D8"/>
    <property type="match status" value="1"/>
</dbReference>
<dbReference type="PANTHER" id="PTHR47953">
    <property type="entry name" value="OS08G0105600 PROTEIN"/>
    <property type="match status" value="1"/>
</dbReference>
<dbReference type="Pfam" id="PF00067">
    <property type="entry name" value="p450"/>
    <property type="match status" value="1"/>
</dbReference>
<dbReference type="PRINTS" id="PR00463">
    <property type="entry name" value="EP450I"/>
</dbReference>
<dbReference type="PRINTS" id="PR00385">
    <property type="entry name" value="P450"/>
</dbReference>
<dbReference type="SUPFAM" id="SSF48264">
    <property type="entry name" value="Cytochrome P450"/>
    <property type="match status" value="1"/>
</dbReference>
<dbReference type="PROSITE" id="PS00086">
    <property type="entry name" value="CYTOCHROME_P450"/>
    <property type="match status" value="1"/>
</dbReference>
<reference key="1">
    <citation type="journal article" date="2014" name="Nat. Commun.">
        <title>The seco-iridoid pathway from Catharanthus roseus.</title>
        <authorList>
            <person name="Miettinen K."/>
            <person name="Dong L."/>
            <person name="Navrot N."/>
            <person name="Schneider T."/>
            <person name="Burlat V."/>
            <person name="Pollier J."/>
            <person name="Woittiez L."/>
            <person name="van der Krol S."/>
            <person name="Lugan R."/>
            <person name="Ilc T."/>
            <person name="Verpoorte R."/>
            <person name="Oksman-Caldentey K.M."/>
            <person name="Martinoia E."/>
            <person name="Bouwmeester H."/>
            <person name="Goossens A."/>
            <person name="Memelink J."/>
            <person name="Werck-Reichhart D."/>
        </authorList>
    </citation>
    <scope>NUCLEOTIDE SEQUENCE [MRNA]</scope>
    <source>
        <strain>cv. Little Bright Eyes</strain>
    </source>
</reference>